<name>TTYH2_HUMAN</name>
<comment type="function">
    <text evidence="1 5">Calcium-independent, swelling-dependent volume-regulated anion channel (VRAC-swell) which plays a pivotal role in the process of regulatory volume decrease (RVD) in the brain through the efflux of anions like chloride and organic osmolytes like glutamate (By similarity). Probable large-conductance Ca(2+)-activated chloride channel (PubMed:15010458).</text>
</comment>
<comment type="catalytic activity">
    <reaction evidence="5">
        <text>chloride(in) = chloride(out)</text>
        <dbReference type="Rhea" id="RHEA:29823"/>
        <dbReference type="ChEBI" id="CHEBI:17996"/>
    </reaction>
</comment>
<comment type="catalytic activity">
    <reaction evidence="1">
        <text>L-glutamate(out) = L-glutamate(in)</text>
        <dbReference type="Rhea" id="RHEA:66336"/>
        <dbReference type="ChEBI" id="CHEBI:29985"/>
    </reaction>
    <physiologicalReaction direction="right-to-left" evidence="1">
        <dbReference type="Rhea" id="RHEA:66338"/>
    </physiologicalReaction>
</comment>
<comment type="subunit">
    <text evidence="1 9 10">Homodimer (PubMed:34385445). Forms cis-homodimers in the presence of Ca(+2) and forms monomers and trans-dimers in the absence of Ca(2+) (By similarity). Interacts with NEDD4L (PubMed:18577513).</text>
</comment>
<comment type="interaction">
    <interactant intactId="EBI-3959652">
        <id>Q9BSA4</id>
    </interactant>
    <interactant intactId="EBI-359063">
        <id>P53618</id>
        <label>COPB1</label>
    </interactant>
    <organismsDiffer>false</organismsDiffer>
    <experiments>7</experiments>
</comment>
<comment type="interaction">
    <interactant intactId="EBI-3959652">
        <id>Q9BSA4</id>
    </interactant>
    <interactant intactId="EBI-11988865">
        <id>A5PKU2</id>
        <label>TUSC5</label>
    </interactant>
    <organismsDiffer>false</organismsDiffer>
    <experiments>3</experiments>
</comment>
<comment type="subcellular location">
    <subcellularLocation>
        <location evidence="8 9 10">Cell membrane</location>
        <topology evidence="2">Multi-pass membrane protein</topology>
    </subcellularLocation>
</comment>
<comment type="alternative products">
    <event type="alternative splicing"/>
    <isoform>
        <id>Q9BSA4-1</id>
        <name>1</name>
        <sequence type="displayed"/>
    </isoform>
    <isoform>
        <id>Q9BSA4-2</id>
        <name>2</name>
        <sequence type="described" ref="VSP_040567"/>
    </isoform>
</comment>
<comment type="tissue specificity">
    <text evidence="3 7">Expressed at higher level in brain and testis and at lower levels in heart, ovary, spleen and peripheral blood leukocytes. Up-regulated in 13 of 16 renal cell carcinoma samples examined. Up-regulated in colon carcinoma.</text>
</comment>
<comment type="PTM">
    <text evidence="8">N- Glycosylated. Contains high-mannose, hybrid and complex oligosaccharides.</text>
</comment>
<comment type="PTM">
    <text evidence="8 9">Ubiquitinated by NEDD4L, leading to its proteasomal degradation.</text>
</comment>
<comment type="similarity">
    <text evidence="12">Belongs to the tweety family.</text>
</comment>
<comment type="caution">
    <text evidence="10">According to PubMed:34385445, lacks Ca(2+)-activated chloride channel and swelling-dependent volume-regulated anion channel activities.</text>
</comment>
<comment type="sequence caution" evidence="12">
    <conflict type="erroneous initiation">
        <sequence resource="EMBL-CDS" id="AAH05168"/>
    </conflict>
    <text>Extended N-terminus.</text>
</comment>
<comment type="sequence caution" evidence="12">
    <conflict type="erroneous initiation">
        <sequence resource="EMBL-CDS" id="BAC03579"/>
    </conflict>
    <text>Truncated N-terminus.</text>
</comment>
<keyword id="KW-0002">3D-structure</keyword>
<keyword id="KW-0025">Alternative splicing</keyword>
<keyword id="KW-0106">Calcium</keyword>
<keyword id="KW-1003">Cell membrane</keyword>
<keyword id="KW-0868">Chloride</keyword>
<keyword id="KW-0869">Chloride channel</keyword>
<keyword id="KW-1015">Disulfide bond</keyword>
<keyword id="KW-0325">Glycoprotein</keyword>
<keyword id="KW-0407">Ion channel</keyword>
<keyword id="KW-0406">Ion transport</keyword>
<keyword id="KW-0472">Membrane</keyword>
<keyword id="KW-0479">Metal-binding</keyword>
<keyword id="KW-0597">Phosphoprotein</keyword>
<keyword id="KW-1267">Proteomics identification</keyword>
<keyword id="KW-1185">Reference proteome</keyword>
<keyword id="KW-0812">Transmembrane</keyword>
<keyword id="KW-1133">Transmembrane helix</keyword>
<keyword id="KW-0813">Transport</keyword>
<keyword id="KW-0832">Ubl conjugation</keyword>
<gene>
    <name type="primary">TTYH2</name>
    <name type="synonym">C17orf29</name>
</gene>
<proteinExistence type="evidence at protein level"/>
<evidence type="ECO:0000250" key="1">
    <source>
        <dbReference type="UniProtKB" id="Q3TH73"/>
    </source>
</evidence>
<evidence type="ECO:0000255" key="2"/>
<evidence type="ECO:0000269" key="3">
    <source>
    </source>
</evidence>
<evidence type="ECO:0000269" key="4">
    <source>
    </source>
</evidence>
<evidence type="ECO:0000269" key="5">
    <source>
    </source>
</evidence>
<evidence type="ECO:0000269" key="6">
    <source>
    </source>
</evidence>
<evidence type="ECO:0000269" key="7">
    <source>
    </source>
</evidence>
<evidence type="ECO:0000269" key="8">
    <source>
    </source>
</evidence>
<evidence type="ECO:0000269" key="9">
    <source>
    </source>
</evidence>
<evidence type="ECO:0000269" key="10">
    <source>
    </source>
</evidence>
<evidence type="ECO:0000303" key="11">
    <source>
    </source>
</evidence>
<evidence type="ECO:0000305" key="12"/>
<evidence type="ECO:0000305" key="13">
    <source>
    </source>
</evidence>
<evidence type="ECO:0007744" key="14">
    <source>
        <dbReference type="PDB" id="7P54"/>
    </source>
</evidence>
<evidence type="ECO:0007744" key="15">
    <source>
        <dbReference type="PDB" id="7P5M"/>
    </source>
</evidence>
<evidence type="ECO:0007744" key="16">
    <source>
    </source>
</evidence>
<evidence type="ECO:0007829" key="17">
    <source>
        <dbReference type="PDB" id="7P54"/>
    </source>
</evidence>
<sequence>MQAARVDYIAPWWVVWLHSVPHVGLRLQPVNSTFSPGDESYQESLLFLGLVAAVCLGLNLIFLVAYLVCACHCRRDDAVQTKQHHSCCITWTAVVAGLICCAAVGVGFYGNSETNDGAYQLMYSLDDANHTFSGIDALVSGTTQKMKVDLEQHLARLSEIFAARGDYLQTLKFIQQMAGSVVVQLSGLPVWREVTMELTKLSDQTGYVEYYRWLSYLLLFILDLVICLIACLGLAKRSKCLLASMLCCGALSLLLSWASLAADGSAAVATSDFCVAPDTFILNVTEGQISTEVTRYYLYCSQSGSSPFQQTLTTFQRALTTMQIQVAGLLQFAVPLFSTAEEDLLAIQLLLNSSESSLHQLTAMVDCRGLHKDYLDALAGICYDGLQGLLYLGLFSFLAALAFSTMICAGPRAWKHFTTRNRDYDDIDDDDPFNPQAWRMAAHSPPRGQLHSFCSYSSGLGSQTSLQPPAQTISNAPVSEYMNQAMLFGRNPRYENVPLIGRASPPPTYSPSMRATYLSVADEHLRHYGNQFPA</sequence>
<reference key="1">
    <citation type="journal article" date="2001" name="Genomics">
        <title>TTYH2, a human homologue of the Drosophila melanogaster gene tweety, is located on 17q24 and upregulated in renal cell carcinoma.</title>
        <authorList>
            <person name="Rae F.K."/>
            <person name="Hooper J.D."/>
            <person name="Eyre H.J."/>
            <person name="Sutherland G.R."/>
            <person name="Nicol D.L."/>
            <person name="Clements J.A."/>
        </authorList>
    </citation>
    <scope>NUCLEOTIDE SEQUENCE [MRNA] (ISOFORM 1)</scope>
    <scope>TISSUE SPECIFICITY</scope>
</reference>
<reference key="2">
    <citation type="journal article" date="2004" name="Nat. Genet.">
        <title>Complete sequencing and characterization of 21,243 full-length human cDNAs.</title>
        <authorList>
            <person name="Ota T."/>
            <person name="Suzuki Y."/>
            <person name="Nishikawa T."/>
            <person name="Otsuki T."/>
            <person name="Sugiyama T."/>
            <person name="Irie R."/>
            <person name="Wakamatsu A."/>
            <person name="Hayashi K."/>
            <person name="Sato H."/>
            <person name="Nagai K."/>
            <person name="Kimura K."/>
            <person name="Makita H."/>
            <person name="Sekine M."/>
            <person name="Obayashi M."/>
            <person name="Nishi T."/>
            <person name="Shibahara T."/>
            <person name="Tanaka T."/>
            <person name="Ishii S."/>
            <person name="Yamamoto J."/>
            <person name="Saito K."/>
            <person name="Kawai Y."/>
            <person name="Isono Y."/>
            <person name="Nakamura Y."/>
            <person name="Nagahari K."/>
            <person name="Murakami K."/>
            <person name="Yasuda T."/>
            <person name="Iwayanagi T."/>
            <person name="Wagatsuma M."/>
            <person name="Shiratori A."/>
            <person name="Sudo H."/>
            <person name="Hosoiri T."/>
            <person name="Kaku Y."/>
            <person name="Kodaira H."/>
            <person name="Kondo H."/>
            <person name="Sugawara M."/>
            <person name="Takahashi M."/>
            <person name="Kanda K."/>
            <person name="Yokoi T."/>
            <person name="Furuya T."/>
            <person name="Kikkawa E."/>
            <person name="Omura Y."/>
            <person name="Abe K."/>
            <person name="Kamihara K."/>
            <person name="Katsuta N."/>
            <person name="Sato K."/>
            <person name="Tanikawa M."/>
            <person name="Yamazaki M."/>
            <person name="Ninomiya K."/>
            <person name="Ishibashi T."/>
            <person name="Yamashita H."/>
            <person name="Murakawa K."/>
            <person name="Fujimori K."/>
            <person name="Tanai H."/>
            <person name="Kimata M."/>
            <person name="Watanabe M."/>
            <person name="Hiraoka S."/>
            <person name="Chiba Y."/>
            <person name="Ishida S."/>
            <person name="Ono Y."/>
            <person name="Takiguchi S."/>
            <person name="Watanabe S."/>
            <person name="Yosida M."/>
            <person name="Hotuta T."/>
            <person name="Kusano J."/>
            <person name="Kanehori K."/>
            <person name="Takahashi-Fujii A."/>
            <person name="Hara H."/>
            <person name="Tanase T.-O."/>
            <person name="Nomura Y."/>
            <person name="Togiya S."/>
            <person name="Komai F."/>
            <person name="Hara R."/>
            <person name="Takeuchi K."/>
            <person name="Arita M."/>
            <person name="Imose N."/>
            <person name="Musashino K."/>
            <person name="Yuuki H."/>
            <person name="Oshima A."/>
            <person name="Sasaki N."/>
            <person name="Aotsuka S."/>
            <person name="Yoshikawa Y."/>
            <person name="Matsunawa H."/>
            <person name="Ichihara T."/>
            <person name="Shiohata N."/>
            <person name="Sano S."/>
            <person name="Moriya S."/>
            <person name="Momiyama H."/>
            <person name="Satoh N."/>
            <person name="Takami S."/>
            <person name="Terashima Y."/>
            <person name="Suzuki O."/>
            <person name="Nakagawa S."/>
            <person name="Senoh A."/>
            <person name="Mizoguchi H."/>
            <person name="Goto Y."/>
            <person name="Shimizu F."/>
            <person name="Wakebe H."/>
            <person name="Hishigaki H."/>
            <person name="Watanabe T."/>
            <person name="Sugiyama A."/>
            <person name="Takemoto M."/>
            <person name="Kawakami B."/>
            <person name="Yamazaki M."/>
            <person name="Watanabe K."/>
            <person name="Kumagai A."/>
            <person name="Itakura S."/>
            <person name="Fukuzumi Y."/>
            <person name="Fujimori Y."/>
            <person name="Komiyama M."/>
            <person name="Tashiro H."/>
            <person name="Tanigami A."/>
            <person name="Fujiwara T."/>
            <person name="Ono T."/>
            <person name="Yamada K."/>
            <person name="Fujii Y."/>
            <person name="Ozaki K."/>
            <person name="Hirao M."/>
            <person name="Ohmori Y."/>
            <person name="Kawabata A."/>
            <person name="Hikiji T."/>
            <person name="Kobatake N."/>
            <person name="Inagaki H."/>
            <person name="Ikema Y."/>
            <person name="Okamoto S."/>
            <person name="Okitani R."/>
            <person name="Kawakami T."/>
            <person name="Noguchi S."/>
            <person name="Itoh T."/>
            <person name="Shigeta K."/>
            <person name="Senba T."/>
            <person name="Matsumura K."/>
            <person name="Nakajima Y."/>
            <person name="Mizuno T."/>
            <person name="Morinaga M."/>
            <person name="Sasaki M."/>
            <person name="Togashi T."/>
            <person name="Oyama M."/>
            <person name="Hata H."/>
            <person name="Watanabe M."/>
            <person name="Komatsu T."/>
            <person name="Mizushima-Sugano J."/>
            <person name="Satoh T."/>
            <person name="Shirai Y."/>
            <person name="Takahashi Y."/>
            <person name="Nakagawa K."/>
            <person name="Okumura K."/>
            <person name="Nagase T."/>
            <person name="Nomura N."/>
            <person name="Kikuchi H."/>
            <person name="Masuho Y."/>
            <person name="Yamashita R."/>
            <person name="Nakai K."/>
            <person name="Yada T."/>
            <person name="Nakamura Y."/>
            <person name="Ohara O."/>
            <person name="Isogai T."/>
            <person name="Sugano S."/>
        </authorList>
    </citation>
    <scope>NUCLEOTIDE SEQUENCE [LARGE SCALE MRNA] (ISOFORM 2)</scope>
    <scope>NUCLEOTIDE SEQUENCE [LARGE SCALE MRNA] OF 97-534 (ISOFORM 1)</scope>
    <scope>VARIANTS ALA-265 AND GLU-423</scope>
    <source>
        <tissue>Hippocampus</tissue>
    </source>
</reference>
<reference key="3">
    <citation type="journal article" date="2006" name="Nature">
        <title>DNA sequence of human chromosome 17 and analysis of rearrangement in the human lineage.</title>
        <authorList>
            <person name="Zody M.C."/>
            <person name="Garber M."/>
            <person name="Adams D.J."/>
            <person name="Sharpe T."/>
            <person name="Harrow J."/>
            <person name="Lupski J.R."/>
            <person name="Nicholson C."/>
            <person name="Searle S.M."/>
            <person name="Wilming L."/>
            <person name="Young S.K."/>
            <person name="Abouelleil A."/>
            <person name="Allen N.R."/>
            <person name="Bi W."/>
            <person name="Bloom T."/>
            <person name="Borowsky M.L."/>
            <person name="Bugalter B.E."/>
            <person name="Butler J."/>
            <person name="Chang J.L."/>
            <person name="Chen C.-K."/>
            <person name="Cook A."/>
            <person name="Corum B."/>
            <person name="Cuomo C.A."/>
            <person name="de Jong P.J."/>
            <person name="DeCaprio D."/>
            <person name="Dewar K."/>
            <person name="FitzGerald M."/>
            <person name="Gilbert J."/>
            <person name="Gibson R."/>
            <person name="Gnerre S."/>
            <person name="Goldstein S."/>
            <person name="Grafham D.V."/>
            <person name="Grocock R."/>
            <person name="Hafez N."/>
            <person name="Hagopian D.S."/>
            <person name="Hart E."/>
            <person name="Norman C.H."/>
            <person name="Humphray S."/>
            <person name="Jaffe D.B."/>
            <person name="Jones M."/>
            <person name="Kamal M."/>
            <person name="Khodiyar V.K."/>
            <person name="LaButti K."/>
            <person name="Laird G."/>
            <person name="Lehoczky J."/>
            <person name="Liu X."/>
            <person name="Lokyitsang T."/>
            <person name="Loveland J."/>
            <person name="Lui A."/>
            <person name="Macdonald P."/>
            <person name="Major J.E."/>
            <person name="Matthews L."/>
            <person name="Mauceli E."/>
            <person name="McCarroll S.A."/>
            <person name="Mihalev A.H."/>
            <person name="Mudge J."/>
            <person name="Nguyen C."/>
            <person name="Nicol R."/>
            <person name="O'Leary S.B."/>
            <person name="Osoegawa K."/>
            <person name="Schwartz D.C."/>
            <person name="Shaw-Smith C."/>
            <person name="Stankiewicz P."/>
            <person name="Steward C."/>
            <person name="Swarbreck D."/>
            <person name="Venkataraman V."/>
            <person name="Whittaker C.A."/>
            <person name="Yang X."/>
            <person name="Zimmer A.R."/>
            <person name="Bradley A."/>
            <person name="Hubbard T."/>
            <person name="Birren B.W."/>
            <person name="Rogers J."/>
            <person name="Lander E.S."/>
            <person name="Nusbaum C."/>
        </authorList>
    </citation>
    <scope>NUCLEOTIDE SEQUENCE [LARGE SCALE GENOMIC DNA]</scope>
</reference>
<reference key="4">
    <citation type="journal article" date="2004" name="Genome Res.">
        <title>The status, quality, and expansion of the NIH full-length cDNA project: the Mammalian Gene Collection (MGC).</title>
        <authorList>
            <consortium name="The MGC Project Team"/>
        </authorList>
    </citation>
    <scope>NUCLEOTIDE SEQUENCE [LARGE SCALE MRNA] (ISOFORM 1)</scope>
    <scope>VARIANTS THR-262; ALA-265 AND GLU-423</scope>
    <source>
        <tissue>Lymph</tissue>
    </source>
</reference>
<reference key="5">
    <citation type="journal article" date="2007" name="BMC Genomics">
        <title>The full-ORF clone resource of the German cDNA consortium.</title>
        <authorList>
            <person name="Bechtel S."/>
            <person name="Rosenfelder H."/>
            <person name="Duda A."/>
            <person name="Schmidt C.P."/>
            <person name="Ernst U."/>
            <person name="Wellenreuther R."/>
            <person name="Mehrle A."/>
            <person name="Schuster C."/>
            <person name="Bahr A."/>
            <person name="Bloecker H."/>
            <person name="Heubner D."/>
            <person name="Hoerlein A."/>
            <person name="Michel G."/>
            <person name="Wedler H."/>
            <person name="Koehrer K."/>
            <person name="Ottenwaelder B."/>
            <person name="Poustka A."/>
            <person name="Wiemann S."/>
            <person name="Schupp I."/>
        </authorList>
    </citation>
    <scope>NUCLEOTIDE SEQUENCE [LARGE SCALE MRNA] OF 269-534 (ISOFORM 1)</scope>
    <source>
        <tissue>Cervix</tissue>
    </source>
</reference>
<reference key="6">
    <citation type="journal article" date="2004" name="J. Biol. Chem.">
        <title>A novel human Cl(-) channel family related to Drosophila flightless locus.</title>
        <authorList>
            <person name="Suzuki M."/>
            <person name="Mizuno A."/>
        </authorList>
    </citation>
    <scope>FUNCTION</scope>
    <scope>TRANSPORTER ACTIVITY</scope>
</reference>
<reference key="7">
    <citation type="journal article" date="2006" name="Cell">
        <title>Global, in vivo, and site-specific phosphorylation dynamics in signaling networks.</title>
        <authorList>
            <person name="Olsen J.V."/>
            <person name="Blagoev B."/>
            <person name="Gnad F."/>
            <person name="Macek B."/>
            <person name="Kumar C."/>
            <person name="Mortensen P."/>
            <person name="Mann M."/>
        </authorList>
    </citation>
    <scope>PHOSPHORYLATION [LARGE SCALE ANALYSIS] AT THR-199</scope>
    <scope>IDENTIFICATION BY MASS SPECTROMETRY [LARGE SCALE ANALYSIS]</scope>
    <source>
        <tissue>Cervix carcinoma</tissue>
    </source>
</reference>
<reference key="8">
    <citation type="journal article" date="2007" name="World J. Gastroenterol.">
        <title>TTYH2, a human homologue of the Drosophila melanogaster gene tweety, is up-regulated in colon carcinoma and involved in cell proliferation and cell aggregation.</title>
        <authorList>
            <person name="Toiyama Y."/>
            <person name="Mizoguchi A."/>
            <person name="Kimura K."/>
            <person name="Hiro J."/>
            <person name="Inoue Y."/>
            <person name="Tutumi T."/>
            <person name="Miki C."/>
            <person name="Kusunoki M."/>
        </authorList>
    </citation>
    <scope>TISSUE SPECIFICITY</scope>
</reference>
<reference key="9">
    <citation type="journal article" date="2008" name="Biochem. J.">
        <title>N-glycosylation analysis of the human Tweety family of putative chloride ion channels supports a penta-spanning membrane arrangement: impact of N-glycosylation on cellular processing of Tweety homologue 2 (TTYH2).</title>
        <authorList>
            <person name="He Y."/>
            <person name="Ramsay A.J."/>
            <person name="Hunt M.L."/>
            <person name="Whitbread A.K."/>
            <person name="Myers S.A."/>
            <person name="Hooper J.D."/>
        </authorList>
    </citation>
    <scope>GLYCOSYLATION AT ASN-31; ASN-129; ASN-283 AND ASN-352</scope>
    <scope>MUTAGENESIS OF ASN-31; ASN-129; ASN-283 AND ASN-352</scope>
    <scope>SUBCELLULAR LOCATION</scope>
    <scope>TOPOLOGY</scope>
    <scope>UBIQUITINATION</scope>
</reference>
<reference key="10">
    <citation type="journal article" date="2008" name="J. Biol. Chem.">
        <title>The ubiquitin-protein ligase Nedd4-2 differentially interacts with and regulates members of the Tweety family of chloride ion channels.</title>
        <authorList>
            <person name="He Y."/>
            <person name="Hryciw D.H."/>
            <person name="Carroll M.L."/>
            <person name="Myers S.A."/>
            <person name="Whitbread A.K."/>
            <person name="Kumar S."/>
            <person name="Poronnik P."/>
            <person name="Hooper J.D."/>
        </authorList>
    </citation>
    <scope>INTERACTION WITH NEDD4L</scope>
    <scope>UBIQUITINATION BY NEDD4L</scope>
    <scope>SUBCELLULAR LOCATION</scope>
    <scope>MUTAGENESIS OF SER-444; SER-504; TYR-509 AND SER-510</scope>
    <scope>PY-MOTIF</scope>
</reference>
<reference evidence="14 15" key="11">
    <citation type="journal article" date="2021" name="Nat. Commun.">
        <title>Cryo-EM structures of the TTYH family reveal a novel architecture for lipid interactions.</title>
        <authorList>
            <person name="Sukalskaia A."/>
            <person name="Straub M.S."/>
            <person name="Deneka D."/>
            <person name="Sawicka M."/>
            <person name="Dutzler R."/>
        </authorList>
    </citation>
    <scope>STRUCTURE BY ELECTRON MICROSCOPY (3.30 ANGSTROMS) OF 2-534</scope>
    <scope>SUBCELLULAR LOCATION</scope>
    <scope>SUBUNIT</scope>
    <scope>DISULFIDE BOND</scope>
    <scope>GLYCOSYLATION AT ASN-31; ASN-129; ASN-283 AND ASN-352</scope>
    <scope>CAUTION</scope>
</reference>
<dbReference type="EMBL" id="AF319952">
    <property type="protein sequence ID" value="AAL16784.1"/>
    <property type="molecule type" value="mRNA"/>
</dbReference>
<dbReference type="EMBL" id="AK126955">
    <property type="protein sequence ID" value="BAG54409.1"/>
    <property type="molecule type" value="mRNA"/>
</dbReference>
<dbReference type="EMBL" id="AK091085">
    <property type="protein sequence ID" value="BAC03579.1"/>
    <property type="status" value="ALT_INIT"/>
    <property type="molecule type" value="mRNA"/>
</dbReference>
<dbReference type="EMBL" id="AC100786">
    <property type="status" value="NOT_ANNOTATED_CDS"/>
    <property type="molecule type" value="Genomic_DNA"/>
</dbReference>
<dbReference type="EMBL" id="BC005168">
    <property type="protein sequence ID" value="AAH05168.1"/>
    <property type="status" value="ALT_INIT"/>
    <property type="molecule type" value="mRNA"/>
</dbReference>
<dbReference type="EMBL" id="BC107492">
    <property type="protein sequence ID" value="AAI07493.1"/>
    <property type="molecule type" value="mRNA"/>
</dbReference>
<dbReference type="EMBL" id="BC107602">
    <property type="protein sequence ID" value="AAI07603.1"/>
    <property type="molecule type" value="mRNA"/>
</dbReference>
<dbReference type="EMBL" id="BX647912">
    <property type="protein sequence ID" value="CAH10576.1"/>
    <property type="molecule type" value="mRNA"/>
</dbReference>
<dbReference type="CCDS" id="CCDS32717.1">
    <molecule id="Q9BSA4-1"/>
</dbReference>
<dbReference type="CCDS" id="CCDS45770.1">
    <molecule id="Q9BSA4-2"/>
</dbReference>
<dbReference type="RefSeq" id="NP_116035.5">
    <molecule id="Q9BSA4-1"/>
    <property type="nucleotide sequence ID" value="NM_032646.5"/>
</dbReference>
<dbReference type="RefSeq" id="NP_443101.1">
    <molecule id="Q9BSA4-2"/>
    <property type="nucleotide sequence ID" value="NM_052869.1"/>
</dbReference>
<dbReference type="PDB" id="7P54">
    <property type="method" value="EM"/>
    <property type="resolution" value="3.30 A"/>
    <property type="chains" value="A/B=2-534"/>
</dbReference>
<dbReference type="PDB" id="7P5M">
    <property type="method" value="EM"/>
    <property type="resolution" value="3.92 A"/>
    <property type="chains" value="A/B=2-534"/>
</dbReference>
<dbReference type="PDBsum" id="7P54"/>
<dbReference type="PDBsum" id="7P5M"/>
<dbReference type="EMDB" id="EMD-13194"/>
<dbReference type="EMDB" id="EMD-13201"/>
<dbReference type="SMR" id="Q9BSA4"/>
<dbReference type="BioGRID" id="125087">
    <property type="interactions" value="25"/>
</dbReference>
<dbReference type="FunCoup" id="Q9BSA4">
    <property type="interactions" value="921"/>
</dbReference>
<dbReference type="IntAct" id="Q9BSA4">
    <property type="interactions" value="11"/>
</dbReference>
<dbReference type="MINT" id="Q9BSA4"/>
<dbReference type="STRING" id="9606.ENSP00000269346"/>
<dbReference type="TCDB" id="1.A.48.1.3">
    <property type="family name" value="the anion channel tweety (tweety) family"/>
</dbReference>
<dbReference type="GlyCosmos" id="Q9BSA4">
    <property type="glycosylation" value="2 sites, No reported glycans"/>
</dbReference>
<dbReference type="GlyGen" id="Q9BSA4">
    <property type="glycosylation" value="4 sites"/>
</dbReference>
<dbReference type="iPTMnet" id="Q9BSA4"/>
<dbReference type="PhosphoSitePlus" id="Q9BSA4"/>
<dbReference type="SwissPalm" id="Q9BSA4"/>
<dbReference type="BioMuta" id="TTYH2"/>
<dbReference type="DMDM" id="296453009"/>
<dbReference type="jPOST" id="Q9BSA4"/>
<dbReference type="MassIVE" id="Q9BSA4"/>
<dbReference type="PaxDb" id="9606-ENSP00000269346"/>
<dbReference type="PeptideAtlas" id="Q9BSA4"/>
<dbReference type="ProteomicsDB" id="78869">
    <molecule id="Q9BSA4-1"/>
</dbReference>
<dbReference type="ProteomicsDB" id="78870">
    <molecule id="Q9BSA4-2"/>
</dbReference>
<dbReference type="Antibodypedia" id="61709">
    <property type="antibodies" value="25 antibodies from 16 providers"/>
</dbReference>
<dbReference type="DNASU" id="94015"/>
<dbReference type="Ensembl" id="ENST00000269346.9">
    <molecule id="Q9BSA4-1"/>
    <property type="protein sequence ID" value="ENSP00000269346.4"/>
    <property type="gene ID" value="ENSG00000141540.11"/>
</dbReference>
<dbReference type="Ensembl" id="ENST00000441391.6">
    <molecule id="Q9BSA4-2"/>
    <property type="protein sequence ID" value="ENSP00000394576.2"/>
    <property type="gene ID" value="ENSG00000141540.11"/>
</dbReference>
<dbReference type="GeneID" id="94015"/>
<dbReference type="KEGG" id="hsa:94015"/>
<dbReference type="MANE-Select" id="ENST00000269346.9">
    <property type="protein sequence ID" value="ENSP00000269346.4"/>
    <property type="RefSeq nucleotide sequence ID" value="NM_032646.6"/>
    <property type="RefSeq protein sequence ID" value="NP_116035.5"/>
</dbReference>
<dbReference type="UCSC" id="uc002jkc.4">
    <molecule id="Q9BSA4-1"/>
    <property type="organism name" value="human"/>
</dbReference>
<dbReference type="AGR" id="HGNC:13877"/>
<dbReference type="CTD" id="94015"/>
<dbReference type="DisGeNET" id="94015"/>
<dbReference type="GeneCards" id="TTYH2"/>
<dbReference type="HGNC" id="HGNC:13877">
    <property type="gene designation" value="TTYH2"/>
</dbReference>
<dbReference type="HPA" id="ENSG00000141540">
    <property type="expression patterns" value="Tissue enriched (brain)"/>
</dbReference>
<dbReference type="MIM" id="608855">
    <property type="type" value="gene"/>
</dbReference>
<dbReference type="neXtProt" id="NX_Q9BSA4"/>
<dbReference type="OpenTargets" id="ENSG00000141540"/>
<dbReference type="PharmGKB" id="PA37823"/>
<dbReference type="VEuPathDB" id="HostDB:ENSG00000141540"/>
<dbReference type="eggNOG" id="KOG4433">
    <property type="taxonomic scope" value="Eukaryota"/>
</dbReference>
<dbReference type="GeneTree" id="ENSGT00950000183060"/>
<dbReference type="HOGENOM" id="CLU_023758_0_1_1"/>
<dbReference type="InParanoid" id="Q9BSA4"/>
<dbReference type="OMA" id="MRATYMS"/>
<dbReference type="OrthoDB" id="187568at2759"/>
<dbReference type="PAN-GO" id="Q9BSA4">
    <property type="GO annotations" value="3 GO annotations based on evolutionary models"/>
</dbReference>
<dbReference type="PhylomeDB" id="Q9BSA4"/>
<dbReference type="TreeFam" id="TF319025"/>
<dbReference type="PathwayCommons" id="Q9BSA4"/>
<dbReference type="Reactome" id="R-HSA-2672351">
    <property type="pathway name" value="Stimuli-sensing channels"/>
</dbReference>
<dbReference type="SignaLink" id="Q9BSA4"/>
<dbReference type="SIGNOR" id="Q9BSA4"/>
<dbReference type="BioGRID-ORCS" id="94015">
    <property type="hits" value="18 hits in 1152 CRISPR screens"/>
</dbReference>
<dbReference type="ChiTaRS" id="TTYH2">
    <property type="organism name" value="human"/>
</dbReference>
<dbReference type="GenomeRNAi" id="94015"/>
<dbReference type="Pharos" id="Q9BSA4">
    <property type="development level" value="Tbio"/>
</dbReference>
<dbReference type="PRO" id="PR:Q9BSA4"/>
<dbReference type="Proteomes" id="UP000005640">
    <property type="component" value="Chromosome 17"/>
</dbReference>
<dbReference type="RNAct" id="Q9BSA4">
    <property type="molecule type" value="protein"/>
</dbReference>
<dbReference type="Bgee" id="ENSG00000141540">
    <property type="expression patterns" value="Expressed in inferior vagus X ganglion and 177 other cell types or tissues"/>
</dbReference>
<dbReference type="ExpressionAtlas" id="Q9BSA4">
    <property type="expression patterns" value="baseline and differential"/>
</dbReference>
<dbReference type="GO" id="GO:0034707">
    <property type="term" value="C:chloride channel complex"/>
    <property type="evidence" value="ECO:0007669"/>
    <property type="project" value="UniProtKB-KW"/>
</dbReference>
<dbReference type="GO" id="GO:0005886">
    <property type="term" value="C:plasma membrane"/>
    <property type="evidence" value="ECO:0000314"/>
    <property type="project" value="UniProtKB"/>
</dbReference>
<dbReference type="GO" id="GO:0005509">
    <property type="term" value="F:calcium ion binding"/>
    <property type="evidence" value="ECO:0000250"/>
    <property type="project" value="UniProtKB"/>
</dbReference>
<dbReference type="GO" id="GO:0005229">
    <property type="term" value="F:intracellularly calcium-gated chloride channel activity"/>
    <property type="evidence" value="ECO:0000318"/>
    <property type="project" value="GO_Central"/>
</dbReference>
<dbReference type="GO" id="GO:0072320">
    <property type="term" value="F:volume-sensitive chloride channel activity"/>
    <property type="evidence" value="ECO:0000318"/>
    <property type="project" value="GO_Central"/>
</dbReference>
<dbReference type="GO" id="GO:0015813">
    <property type="term" value="P:L-glutamate transmembrane transport"/>
    <property type="evidence" value="ECO:0007669"/>
    <property type="project" value="Ensembl"/>
</dbReference>
<dbReference type="CDD" id="cd07912">
    <property type="entry name" value="Tweety_N"/>
    <property type="match status" value="1"/>
</dbReference>
<dbReference type="InterPro" id="IPR006990">
    <property type="entry name" value="Tweety"/>
</dbReference>
<dbReference type="PANTHER" id="PTHR12424:SF6">
    <property type="entry name" value="PROTEIN TWEETY HOMOLOG 2"/>
    <property type="match status" value="1"/>
</dbReference>
<dbReference type="PANTHER" id="PTHR12424">
    <property type="entry name" value="TWEETY-RELATED"/>
    <property type="match status" value="1"/>
</dbReference>
<dbReference type="Pfam" id="PF04906">
    <property type="entry name" value="Tweety"/>
    <property type="match status" value="1"/>
</dbReference>
<feature type="chain" id="PRO_0000312246" description="Protein tweety homolog 2">
    <location>
        <begin position="1"/>
        <end position="534"/>
    </location>
</feature>
<feature type="topological domain" description="Extracellular" evidence="13">
    <location>
        <begin position="1"/>
        <end position="44"/>
    </location>
</feature>
<feature type="transmembrane region" description="Helical; Name=1" evidence="2">
    <location>
        <begin position="45"/>
        <end position="65"/>
    </location>
</feature>
<feature type="topological domain" description="Cytoplasmic" evidence="13">
    <location>
        <begin position="66"/>
        <end position="87"/>
    </location>
</feature>
<feature type="transmembrane region" description="Helical; Name=2" evidence="2">
    <location>
        <begin position="88"/>
        <end position="108"/>
    </location>
</feature>
<feature type="topological domain" description="Extracellular" evidence="13">
    <location>
        <begin position="109"/>
        <end position="213"/>
    </location>
</feature>
<feature type="transmembrane region" description="Helical; Name=3" evidence="2">
    <location>
        <begin position="214"/>
        <end position="234"/>
    </location>
</feature>
<feature type="topological domain" description="Cytoplasmic" evidence="13">
    <location>
        <begin position="235"/>
        <end position="240"/>
    </location>
</feature>
<feature type="transmembrane region" description="Helical; Name=4" evidence="2">
    <location>
        <begin position="241"/>
        <end position="261"/>
    </location>
</feature>
<feature type="topological domain" description="Extracellular" evidence="13">
    <location>
        <begin position="262"/>
        <end position="388"/>
    </location>
</feature>
<feature type="transmembrane region" description="Helical; Name=5" evidence="2">
    <location>
        <begin position="389"/>
        <end position="409"/>
    </location>
</feature>
<feature type="topological domain" description="Cytoplasmic" evidence="13">
    <location>
        <begin position="410"/>
        <end position="534"/>
    </location>
</feature>
<feature type="short sequence motif" description="RGD" evidence="1">
    <location>
        <begin position="164"/>
        <end position="166"/>
    </location>
</feature>
<feature type="short sequence motif" description="PY-motif; mediates interaction with NEDD4L" evidence="9">
    <location>
        <begin position="506"/>
        <end position="509"/>
    </location>
</feature>
<feature type="binding site" evidence="1">
    <location>
        <position position="113"/>
    </location>
    <ligand>
        <name>Ca(2+)</name>
        <dbReference type="ChEBI" id="CHEBI:29108"/>
    </ligand>
</feature>
<feature type="binding site" evidence="1">
    <location>
        <position position="116"/>
    </location>
    <ligand>
        <name>Ca(2+)</name>
        <dbReference type="ChEBI" id="CHEBI:29108"/>
    </ligand>
</feature>
<feature type="site" description="Essential for the formation of the channel-pore" evidence="1">
    <location>
        <position position="164"/>
    </location>
</feature>
<feature type="modified residue" description="Phosphothreonine" evidence="16">
    <location>
        <position position="199"/>
    </location>
</feature>
<feature type="modified residue" description="Phosphoserine" evidence="1">
    <location>
        <position position="504"/>
    </location>
</feature>
<feature type="glycosylation site" description="N-linked (GlcNAc...) asparagine" evidence="8 10">
    <location>
        <position position="31"/>
    </location>
</feature>
<feature type="glycosylation site" description="N-linked (GlcNAc) asparagine" evidence="8 10">
    <location>
        <position position="129"/>
    </location>
</feature>
<feature type="glycosylation site" description="N-linked (GlcNAc...) asparagine" evidence="8 10">
    <location>
        <position position="283"/>
    </location>
</feature>
<feature type="glycosylation site" description="N-linked (GlcNAc) asparagine" evidence="8 10">
    <location>
        <position position="352"/>
    </location>
</feature>
<feature type="disulfide bond" evidence="10">
    <location>
        <begin position="274"/>
        <end position="382"/>
    </location>
</feature>
<feature type="disulfide bond" evidence="10">
    <location>
        <begin position="300"/>
        <end position="367"/>
    </location>
</feature>
<feature type="splice variant" id="VSP_040567" description="In isoform 2." evidence="11">
    <location>
        <begin position="1"/>
        <end position="321"/>
    </location>
</feature>
<feature type="sequence variant" id="VAR_037460" description="In dbSNP:rs11538875.">
    <original>P</original>
    <variation>H</variation>
    <location>
        <position position="11"/>
    </location>
</feature>
<feature type="sequence variant" id="VAR_037461" description="In dbSNP:rs11538876.">
    <original>H</original>
    <variation>D</variation>
    <location>
        <position position="85"/>
    </location>
</feature>
<feature type="sequence variant" id="VAR_037462" description="In dbSNP:rs35682745." evidence="6">
    <original>A</original>
    <variation>T</variation>
    <location>
        <position position="262"/>
    </location>
</feature>
<feature type="sequence variant" id="VAR_037463" description="In dbSNP:rs35999669." evidence="4 6">
    <original>S</original>
    <variation>A</variation>
    <location>
        <position position="265"/>
    </location>
</feature>
<feature type="sequence variant" id="VAR_057791" description="In dbSNP:rs9892705.">
    <original>A</original>
    <variation>E</variation>
    <location>
        <position position="409"/>
    </location>
</feature>
<feature type="sequence variant" id="VAR_037464" description="In dbSNP:rs12600564.">
    <original>T</original>
    <variation>I</variation>
    <location>
        <position position="419"/>
    </location>
</feature>
<feature type="sequence variant" id="VAR_037465" description="In dbSNP:rs9899862." evidence="4 6">
    <original>D</original>
    <variation>E</variation>
    <location>
        <position position="423"/>
    </location>
</feature>
<feature type="mutagenesis site" description="Loss of glycosylation. No effect on cell membrane localization, increased ubiquitination and significant decrease in protein levels; when associated with Q-129; Q-283 and Q-352." evidence="8">
    <original>N</original>
    <variation>Q</variation>
    <location>
        <position position="31"/>
    </location>
</feature>
<feature type="mutagenesis site" description="Loss of glycosylation. No effect on cell membrane localization, increased ubiquitination and significant decrease in protein levels; when associated with Q-31; Q-283 and Q-352." evidence="8">
    <original>N</original>
    <variation>Q</variation>
    <location>
        <position position="129"/>
    </location>
</feature>
<feature type="mutagenesis site" description="Loss of glycosylation. No effect on cell membrane localization, increased ubiquitination and significant decrease in protein levels; when associated with Q-31; Q-129 and Q-352." evidence="8">
    <original>N</original>
    <variation>Q</variation>
    <location>
        <position position="283"/>
    </location>
</feature>
<feature type="mutagenesis site" description="Loss of glycosylation. No effect on cell membrane localization, increased ubiquitination and significant decrease in protein levels; when associated with Q-31; Q-129 and Q-283." evidence="8">
    <original>N</original>
    <variation>Q</variation>
    <location>
        <position position="352"/>
    </location>
</feature>
<feature type="mutagenesis site" description="No effect on interaction with NEDD4L and NEDD4L-mediated ubiquitination." evidence="9">
    <original>S</original>
    <variation>A</variation>
    <location>
        <position position="444"/>
    </location>
</feature>
<feature type="mutagenesis site" description="No effect on interaction with NEDD4L and NEDD4L-mediated ubiquitination." evidence="9">
    <original>S</original>
    <variation>A</variation>
    <location>
        <position position="504"/>
    </location>
</feature>
<feature type="mutagenesis site" description="Loss of interaction with NEDD4L and almost complete loss of NEDD4L-mediated ubiquitination. A 3-fold increase in its expression in the cell membrane and a 1.5-fold increase in protein levels." evidence="9">
    <original>Y</original>
    <variation>F</variation>
    <location>
        <position position="509"/>
    </location>
</feature>
<feature type="mutagenesis site" description="Reduced interaction with NEDD4L and reduced NEDD4L-mediated ubiquitination. A 2-fold increase in its expression in the cell membrane and a 1.5-fold increase in protein levels." evidence="9">
    <original>S</original>
    <variation>A</variation>
    <location>
        <position position="510"/>
    </location>
</feature>
<feature type="sequence conflict" description="In Ref. 1; AAL16784." evidence="12" ref="1">
    <original>A</original>
    <variation>S</variation>
    <location>
        <position position="4"/>
    </location>
</feature>
<feature type="sequence conflict" description="In Ref. 1; AAL16784 and 2; BAC03579." evidence="12" ref="1 2">
    <original>V</original>
    <variation>I</variation>
    <location>
        <position position="181"/>
    </location>
</feature>
<feature type="sequence conflict" description="In Ref. 2; BAG54409." evidence="12" ref="2">
    <original>G</original>
    <variation>V</variation>
    <location>
        <position position="388"/>
    </location>
</feature>
<feature type="helix" evidence="17">
    <location>
        <begin position="12"/>
        <end position="18"/>
    </location>
</feature>
<feature type="strand" evidence="17">
    <location>
        <begin position="25"/>
        <end position="27"/>
    </location>
</feature>
<feature type="helix" evidence="17">
    <location>
        <begin position="39"/>
        <end position="71"/>
    </location>
</feature>
<feature type="helix" evidence="17">
    <location>
        <begin position="89"/>
        <end position="160"/>
    </location>
</feature>
<feature type="turn" evidence="17">
    <location>
        <begin position="161"/>
        <end position="163"/>
    </location>
</feature>
<feature type="helix" evidence="17">
    <location>
        <begin position="165"/>
        <end position="186"/>
    </location>
</feature>
<feature type="helix" evidence="17">
    <location>
        <begin position="192"/>
        <end position="236"/>
    </location>
</feature>
<feature type="helix" evidence="17">
    <location>
        <begin position="239"/>
        <end position="275"/>
    </location>
</feature>
<feature type="helix" evidence="17">
    <location>
        <begin position="277"/>
        <end position="284"/>
    </location>
</feature>
<feature type="strand" evidence="17">
    <location>
        <begin position="285"/>
        <end position="289"/>
    </location>
</feature>
<feature type="helix" evidence="17">
    <location>
        <begin position="291"/>
        <end position="298"/>
    </location>
</feature>
<feature type="strand" evidence="17">
    <location>
        <begin position="302"/>
        <end position="304"/>
    </location>
</feature>
<feature type="helix" evidence="17">
    <location>
        <begin position="309"/>
        <end position="336"/>
    </location>
</feature>
<feature type="helix" evidence="17">
    <location>
        <begin position="342"/>
        <end position="364"/>
    </location>
</feature>
<feature type="helix" evidence="17">
    <location>
        <begin position="367"/>
        <end position="382"/>
    </location>
</feature>
<feature type="helix" evidence="17">
    <location>
        <begin position="385"/>
        <end position="408"/>
    </location>
</feature>
<feature type="helix" evidence="17">
    <location>
        <begin position="410"/>
        <end position="415"/>
    </location>
</feature>
<organism>
    <name type="scientific">Homo sapiens</name>
    <name type="common">Human</name>
    <dbReference type="NCBI Taxonomy" id="9606"/>
    <lineage>
        <taxon>Eukaryota</taxon>
        <taxon>Metazoa</taxon>
        <taxon>Chordata</taxon>
        <taxon>Craniata</taxon>
        <taxon>Vertebrata</taxon>
        <taxon>Euteleostomi</taxon>
        <taxon>Mammalia</taxon>
        <taxon>Eutheria</taxon>
        <taxon>Euarchontoglires</taxon>
        <taxon>Primates</taxon>
        <taxon>Haplorrhini</taxon>
        <taxon>Catarrhini</taxon>
        <taxon>Hominidae</taxon>
        <taxon>Homo</taxon>
    </lineage>
</organism>
<accession>Q9BSA4</accession>
<accession>B3KX97</accession>
<accession>Q3B7H8</accession>
<accession>Q3B7R9</accession>
<accession>Q6AWB4</accession>
<accession>Q8NBB7</accession>
<accession>Q96PK1</accession>
<protein>
    <recommendedName>
        <fullName>Protein tweety homolog 2</fullName>
        <shortName>hTTY2</shortName>
    </recommendedName>
    <alternativeName>
        <fullName evidence="1">Volume-regulated anion channel subunit TTYH2</fullName>
    </alternativeName>
</protein>